<gene>
    <name type="primary">hexA</name>
    <name type="ordered locus">SP_2076</name>
</gene>
<proteinExistence type="inferred from homology"/>
<name>HEXA_STRPN</name>
<protein>
    <recommendedName>
        <fullName>DNA mismatch repair protein HexA</fullName>
    </recommendedName>
</protein>
<feature type="chain" id="PRO_0000115147" description="DNA mismatch repair protein HexA">
    <location>
        <begin position="1"/>
        <end position="844"/>
    </location>
</feature>
<feature type="binding site" evidence="1">
    <location>
        <begin position="602"/>
        <end position="609"/>
    </location>
    <ligand>
        <name>ATP</name>
        <dbReference type="ChEBI" id="CHEBI:30616"/>
    </ligand>
</feature>
<sequence>MAIEKLSPGMQQYVDIKKQYPDAFLLFRMGDFYELFYEDAVNAAQILEISLTSRNKNADNPIPMAGVPYHSAQQYIDVLIEQGYKVAIAEQMEDPKQAVGVVKREVVQVITPGTVVDSSKPDSQNNFLVSIDREGNQFGLAYMDLVTGDFYVTGLLDFTLVCGEIRNLKAREVVLGYDLSEEEEQILSRQMNLVLSYEKESFEDLHLLDLRLATVEQTASSKLLQYVHRTQMRELNHLKPVIRYEIKDFLQMDYATKASLDLVENARSGKKQGSLFWLLDETKTAMGMRLLRSWIHRPLIDKERIVQRQEVVQVFLDHFFERSDLTDSLKGVYDIERLASRVSFGKTNPKDLLQLATTLSSVPRIRAILEGMEQPTLAYLIAQLDAIPELESLISAAIAPEAPHVITDGGIIRTGFDETLDKYRCVLREGTSWIAEIEAKERENSGISTLKIDYNKKDGYYFHVTNSQLGNVPAHFFRKATLKNSERFGTEELARIEGDMLEAREKSANLEYEIFMRIREEVGKYIQRLQALAQGIATVDVLQSLAVVAETQHLIRPEFGDDSQIDIRKGRHAVVEKVMGAQTYIPNTIQMAEDTSIQLVTGPNMSGKSTYMRQLAMTAVMAQLGSYVPAESAHLPIFDAIFTRIGAADDLVSGQSTFMVEMMEANNAISHATKNSLILFDELGRGTATYDGMALAQSIIEYIHEHIGAKTLFATHYHELTSLESSLQHLVNVHVATLEQDGQVTFLHKIEPGPADKSYGIHVAKIAGLPADLLARADKILTQLENQGTESPPPMRQTSAVTEQISLFDRAEEHPILAELAKLDVYNMTPMQVMNVLVELKQKL</sequence>
<accession>P0A3R3</accession>
<accession>P10564</accession>
<keyword id="KW-0067">ATP-binding</keyword>
<keyword id="KW-0227">DNA damage</keyword>
<keyword id="KW-0234">DNA repair</keyword>
<keyword id="KW-0238">DNA-binding</keyword>
<keyword id="KW-0547">Nucleotide-binding</keyword>
<keyword id="KW-1185">Reference proteome</keyword>
<organism>
    <name type="scientific">Streptococcus pneumoniae serotype 4 (strain ATCC BAA-334 / TIGR4)</name>
    <dbReference type="NCBI Taxonomy" id="170187"/>
    <lineage>
        <taxon>Bacteria</taxon>
        <taxon>Bacillati</taxon>
        <taxon>Bacillota</taxon>
        <taxon>Bacilli</taxon>
        <taxon>Lactobacillales</taxon>
        <taxon>Streptococcaceae</taxon>
        <taxon>Streptococcus</taxon>
    </lineage>
</organism>
<comment type="function">
    <text>This protein is involved in the repair of mismatches in DNA. It is possible that it carries out the mismatch recognition step.</text>
</comment>
<comment type="similarity">
    <text evidence="2">Belongs to the DNA mismatch repair MutS family.</text>
</comment>
<comment type="sequence caution" evidence="2">
    <conflict type="frameshift">
        <sequence resource="EMBL" id="AE005672"/>
    </conflict>
    <text>This may be a natural frameshift.</text>
</comment>
<reference key="1">
    <citation type="journal article" date="1988" name="J. Bacteriol.">
        <title>Nucleotide sequence of the hexA gene for DNA mismatch repair in Streptococcus pneumoniae and homology of hexA to mutS of Escherichia coli and Salmonella typhimurium.</title>
        <authorList>
            <person name="Priebe S.D."/>
            <person name="Hadi S.M."/>
            <person name="Greenberg B."/>
            <person name="Lacks S.A."/>
        </authorList>
    </citation>
    <scope>NUCLEOTIDE SEQUENCE [GENOMIC DNA]</scope>
    <source>
        <strain>175</strain>
    </source>
</reference>
<reference key="2">
    <citation type="journal article" date="2001" name="Science">
        <title>Complete genome sequence of a virulent isolate of Streptococcus pneumoniae.</title>
        <authorList>
            <person name="Tettelin H."/>
            <person name="Nelson K.E."/>
            <person name="Paulsen I.T."/>
            <person name="Eisen J.A."/>
            <person name="Read T.D."/>
            <person name="Peterson S.N."/>
            <person name="Heidelberg J.F."/>
            <person name="DeBoy R.T."/>
            <person name="Haft D.H."/>
            <person name="Dodson R.J."/>
            <person name="Durkin A.S."/>
            <person name="Gwinn M.L."/>
            <person name="Kolonay J.F."/>
            <person name="Nelson W.C."/>
            <person name="Peterson J.D."/>
            <person name="Umayam L.A."/>
            <person name="White O."/>
            <person name="Salzberg S.L."/>
            <person name="Lewis M.R."/>
            <person name="Radune D."/>
            <person name="Holtzapple E.K."/>
            <person name="Khouri H.M."/>
            <person name="Wolf A.M."/>
            <person name="Utterback T.R."/>
            <person name="Hansen C.L."/>
            <person name="McDonald L.A."/>
            <person name="Feldblyum T.V."/>
            <person name="Angiuoli S.V."/>
            <person name="Dickinson T."/>
            <person name="Hickey E.K."/>
            <person name="Holt I.E."/>
            <person name="Loftus B.J."/>
            <person name="Yang F."/>
            <person name="Smith H.O."/>
            <person name="Venter J.C."/>
            <person name="Dougherty B.A."/>
            <person name="Morrison D.A."/>
            <person name="Hollingshead S.K."/>
            <person name="Fraser C.M."/>
        </authorList>
    </citation>
    <scope>NUCLEOTIDE SEQUENCE [LARGE SCALE GENOMIC DNA]</scope>
    <source>
        <strain>ATCC BAA-334 / TIGR4</strain>
    </source>
</reference>
<dbReference type="EMBL" id="M18729">
    <property type="protein sequence ID" value="AAA88597.1"/>
    <property type="molecule type" value="Genomic_DNA"/>
</dbReference>
<dbReference type="EMBL" id="AE005672">
    <property type="status" value="NOT_ANNOTATED_CDS"/>
    <property type="molecule type" value="Genomic_DNA"/>
</dbReference>
<dbReference type="PIR" id="C28667">
    <property type="entry name" value="C28667"/>
</dbReference>
<dbReference type="SMR" id="P0A3R3"/>
<dbReference type="PhylomeDB" id="P0A3R3"/>
<dbReference type="Proteomes" id="UP000000585">
    <property type="component" value="Chromosome"/>
</dbReference>
<dbReference type="GO" id="GO:0005829">
    <property type="term" value="C:cytosol"/>
    <property type="evidence" value="ECO:0007669"/>
    <property type="project" value="TreeGrafter"/>
</dbReference>
<dbReference type="GO" id="GO:0005524">
    <property type="term" value="F:ATP binding"/>
    <property type="evidence" value="ECO:0007669"/>
    <property type="project" value="UniProtKB-UniRule"/>
</dbReference>
<dbReference type="GO" id="GO:0140664">
    <property type="term" value="F:ATP-dependent DNA damage sensor activity"/>
    <property type="evidence" value="ECO:0007669"/>
    <property type="project" value="InterPro"/>
</dbReference>
<dbReference type="GO" id="GO:0003684">
    <property type="term" value="F:damaged DNA binding"/>
    <property type="evidence" value="ECO:0007669"/>
    <property type="project" value="UniProtKB-UniRule"/>
</dbReference>
<dbReference type="GO" id="GO:0030983">
    <property type="term" value="F:mismatched DNA binding"/>
    <property type="evidence" value="ECO:0007669"/>
    <property type="project" value="InterPro"/>
</dbReference>
<dbReference type="GO" id="GO:0006298">
    <property type="term" value="P:mismatch repair"/>
    <property type="evidence" value="ECO:0007669"/>
    <property type="project" value="UniProtKB-UniRule"/>
</dbReference>
<dbReference type="CDD" id="cd03284">
    <property type="entry name" value="ABC_MutS1"/>
    <property type="match status" value="1"/>
</dbReference>
<dbReference type="FunFam" id="1.10.1420.10:FF:000018">
    <property type="entry name" value="DNA mismatch repair protein MutS"/>
    <property type="match status" value="1"/>
</dbReference>
<dbReference type="FunFam" id="3.30.420.110:FF:000015">
    <property type="entry name" value="DNA mismatch repair protein MutS"/>
    <property type="match status" value="1"/>
</dbReference>
<dbReference type="FunFam" id="3.40.1170.10:FF:000001">
    <property type="entry name" value="DNA mismatch repair protein MutS"/>
    <property type="match status" value="1"/>
</dbReference>
<dbReference type="FunFam" id="3.40.50.300:FF:000896">
    <property type="entry name" value="DNA mismatch repair protein MutS"/>
    <property type="match status" value="1"/>
</dbReference>
<dbReference type="Gene3D" id="1.10.1420.10">
    <property type="match status" value="2"/>
</dbReference>
<dbReference type="Gene3D" id="3.40.1170.10">
    <property type="entry name" value="DNA repair protein MutS, domain I"/>
    <property type="match status" value="1"/>
</dbReference>
<dbReference type="Gene3D" id="3.30.420.110">
    <property type="entry name" value="MutS, connector domain"/>
    <property type="match status" value="1"/>
</dbReference>
<dbReference type="Gene3D" id="3.40.50.300">
    <property type="entry name" value="P-loop containing nucleotide triphosphate hydrolases"/>
    <property type="match status" value="1"/>
</dbReference>
<dbReference type="HAMAP" id="MF_00096">
    <property type="entry name" value="MutS"/>
    <property type="match status" value="1"/>
</dbReference>
<dbReference type="InterPro" id="IPR005748">
    <property type="entry name" value="DNA_mismatch_repair_MutS"/>
</dbReference>
<dbReference type="InterPro" id="IPR007695">
    <property type="entry name" value="DNA_mismatch_repair_MutS-lik_N"/>
</dbReference>
<dbReference type="InterPro" id="IPR017261">
    <property type="entry name" value="DNA_mismatch_repair_MutS/MSH"/>
</dbReference>
<dbReference type="InterPro" id="IPR000432">
    <property type="entry name" value="DNA_mismatch_repair_MutS_C"/>
</dbReference>
<dbReference type="InterPro" id="IPR007861">
    <property type="entry name" value="DNA_mismatch_repair_MutS_clamp"/>
</dbReference>
<dbReference type="InterPro" id="IPR007696">
    <property type="entry name" value="DNA_mismatch_repair_MutS_core"/>
</dbReference>
<dbReference type="InterPro" id="IPR016151">
    <property type="entry name" value="DNA_mismatch_repair_MutS_N"/>
</dbReference>
<dbReference type="InterPro" id="IPR036187">
    <property type="entry name" value="DNA_mismatch_repair_MutS_sf"/>
</dbReference>
<dbReference type="InterPro" id="IPR007860">
    <property type="entry name" value="DNA_mmatch_repair_MutS_con_dom"/>
</dbReference>
<dbReference type="InterPro" id="IPR045076">
    <property type="entry name" value="MutS"/>
</dbReference>
<dbReference type="InterPro" id="IPR036678">
    <property type="entry name" value="MutS_con_dom_sf"/>
</dbReference>
<dbReference type="InterPro" id="IPR027417">
    <property type="entry name" value="P-loop_NTPase"/>
</dbReference>
<dbReference type="NCBIfam" id="TIGR01070">
    <property type="entry name" value="mutS1"/>
    <property type="match status" value="1"/>
</dbReference>
<dbReference type="NCBIfam" id="NF003810">
    <property type="entry name" value="PRK05399.1"/>
    <property type="match status" value="1"/>
</dbReference>
<dbReference type="PANTHER" id="PTHR11361:SF34">
    <property type="entry name" value="DNA MISMATCH REPAIR PROTEIN MSH1, MITOCHONDRIAL"/>
    <property type="match status" value="1"/>
</dbReference>
<dbReference type="PANTHER" id="PTHR11361">
    <property type="entry name" value="DNA MISMATCH REPAIR PROTEIN MUTS FAMILY MEMBER"/>
    <property type="match status" value="1"/>
</dbReference>
<dbReference type="Pfam" id="PF01624">
    <property type="entry name" value="MutS_I"/>
    <property type="match status" value="1"/>
</dbReference>
<dbReference type="Pfam" id="PF05188">
    <property type="entry name" value="MutS_II"/>
    <property type="match status" value="1"/>
</dbReference>
<dbReference type="Pfam" id="PF05192">
    <property type="entry name" value="MutS_III"/>
    <property type="match status" value="1"/>
</dbReference>
<dbReference type="Pfam" id="PF05190">
    <property type="entry name" value="MutS_IV"/>
    <property type="match status" value="1"/>
</dbReference>
<dbReference type="Pfam" id="PF00488">
    <property type="entry name" value="MutS_V"/>
    <property type="match status" value="1"/>
</dbReference>
<dbReference type="PIRSF" id="PIRSF037677">
    <property type="entry name" value="DNA_mis_repair_Msh6"/>
    <property type="match status" value="1"/>
</dbReference>
<dbReference type="SMART" id="SM00534">
    <property type="entry name" value="MUTSac"/>
    <property type="match status" value="1"/>
</dbReference>
<dbReference type="SMART" id="SM00533">
    <property type="entry name" value="MUTSd"/>
    <property type="match status" value="1"/>
</dbReference>
<dbReference type="SUPFAM" id="SSF55271">
    <property type="entry name" value="DNA repair protein MutS, domain I"/>
    <property type="match status" value="1"/>
</dbReference>
<dbReference type="SUPFAM" id="SSF53150">
    <property type="entry name" value="DNA repair protein MutS, domain II"/>
    <property type="match status" value="1"/>
</dbReference>
<dbReference type="SUPFAM" id="SSF48334">
    <property type="entry name" value="DNA repair protein MutS, domain III"/>
    <property type="match status" value="1"/>
</dbReference>
<dbReference type="SUPFAM" id="SSF52540">
    <property type="entry name" value="P-loop containing nucleoside triphosphate hydrolases"/>
    <property type="match status" value="1"/>
</dbReference>
<dbReference type="PROSITE" id="PS00486">
    <property type="entry name" value="DNA_MISMATCH_REPAIR_2"/>
    <property type="match status" value="1"/>
</dbReference>
<evidence type="ECO:0000255" key="1"/>
<evidence type="ECO:0000305" key="2"/>